<protein>
    <recommendedName>
        <fullName evidence="1">Large ribosomal subunit protein bL34</fullName>
    </recommendedName>
    <alternativeName>
        <fullName evidence="2">50S ribosomal protein L34</fullName>
    </alternativeName>
</protein>
<accession>B7J206</accession>
<comment type="similarity">
    <text evidence="1">Belongs to the bacterial ribosomal protein bL34 family.</text>
</comment>
<keyword id="KW-0687">Ribonucleoprotein</keyword>
<keyword id="KW-0689">Ribosomal protein</keyword>
<proteinExistence type="inferred from homology"/>
<reference key="1">
    <citation type="journal article" date="2011" name="J. Bacteriol.">
        <title>Whole-genome sequences of thirteen isolates of Borrelia burgdorferi.</title>
        <authorList>
            <person name="Schutzer S.E."/>
            <person name="Fraser-Liggett C.M."/>
            <person name="Casjens S.R."/>
            <person name="Qiu W.G."/>
            <person name="Dunn J.J."/>
            <person name="Mongodin E.F."/>
            <person name="Luft B.J."/>
        </authorList>
    </citation>
    <scope>NUCLEOTIDE SEQUENCE [LARGE SCALE GENOMIC DNA]</scope>
    <source>
        <strain>ZS7</strain>
    </source>
</reference>
<sequence length="51" mass="6201">MKRTYQPSRVKRNRKFGFRARMKTKGGRLILSRRRAKGRMKLTVSDEKKKY</sequence>
<organism>
    <name type="scientific">Borreliella burgdorferi (strain ZS7)</name>
    <name type="common">Borrelia burgdorferi</name>
    <dbReference type="NCBI Taxonomy" id="445985"/>
    <lineage>
        <taxon>Bacteria</taxon>
        <taxon>Pseudomonadati</taxon>
        <taxon>Spirochaetota</taxon>
        <taxon>Spirochaetia</taxon>
        <taxon>Spirochaetales</taxon>
        <taxon>Borreliaceae</taxon>
        <taxon>Borreliella</taxon>
    </lineage>
</organism>
<evidence type="ECO:0000255" key="1">
    <source>
        <dbReference type="HAMAP-Rule" id="MF_00391"/>
    </source>
</evidence>
<evidence type="ECO:0000305" key="2"/>
<feature type="chain" id="PRO_1000196008" description="Large ribosomal subunit protein bL34">
    <location>
        <begin position="1"/>
        <end position="51"/>
    </location>
</feature>
<dbReference type="EMBL" id="CP001205">
    <property type="protein sequence ID" value="ACK74943.1"/>
    <property type="molecule type" value="Genomic_DNA"/>
</dbReference>
<dbReference type="RefSeq" id="WP_002557032.1">
    <property type="nucleotide sequence ID" value="NC_011728.1"/>
</dbReference>
<dbReference type="SMR" id="B7J206"/>
<dbReference type="GeneID" id="56567871"/>
<dbReference type="KEGG" id="bbz:BbuZS7_0446"/>
<dbReference type="HOGENOM" id="CLU_129938_2_0_12"/>
<dbReference type="Proteomes" id="UP000006901">
    <property type="component" value="Chromosome"/>
</dbReference>
<dbReference type="GO" id="GO:1990904">
    <property type="term" value="C:ribonucleoprotein complex"/>
    <property type="evidence" value="ECO:0007669"/>
    <property type="project" value="UniProtKB-KW"/>
</dbReference>
<dbReference type="GO" id="GO:0005840">
    <property type="term" value="C:ribosome"/>
    <property type="evidence" value="ECO:0007669"/>
    <property type="project" value="UniProtKB-KW"/>
</dbReference>
<dbReference type="GO" id="GO:0003735">
    <property type="term" value="F:structural constituent of ribosome"/>
    <property type="evidence" value="ECO:0007669"/>
    <property type="project" value="InterPro"/>
</dbReference>
<dbReference type="GO" id="GO:0006412">
    <property type="term" value="P:translation"/>
    <property type="evidence" value="ECO:0007669"/>
    <property type="project" value="UniProtKB-UniRule"/>
</dbReference>
<dbReference type="FunFam" id="1.10.287.3980:FF:000001">
    <property type="entry name" value="Mitochondrial ribosomal protein L34"/>
    <property type="match status" value="1"/>
</dbReference>
<dbReference type="Gene3D" id="1.10.287.3980">
    <property type="match status" value="1"/>
</dbReference>
<dbReference type="HAMAP" id="MF_00391">
    <property type="entry name" value="Ribosomal_bL34"/>
    <property type="match status" value="1"/>
</dbReference>
<dbReference type="InterPro" id="IPR000271">
    <property type="entry name" value="Ribosomal_bL34"/>
</dbReference>
<dbReference type="InterPro" id="IPR020939">
    <property type="entry name" value="Ribosomal_bL34_CS"/>
</dbReference>
<dbReference type="NCBIfam" id="TIGR01030">
    <property type="entry name" value="rpmH_bact"/>
    <property type="match status" value="1"/>
</dbReference>
<dbReference type="PANTHER" id="PTHR14503:SF4">
    <property type="entry name" value="LARGE RIBOSOMAL SUBUNIT PROTEIN BL34M"/>
    <property type="match status" value="1"/>
</dbReference>
<dbReference type="PANTHER" id="PTHR14503">
    <property type="entry name" value="MITOCHONDRIAL RIBOSOMAL PROTEIN 34 FAMILY MEMBER"/>
    <property type="match status" value="1"/>
</dbReference>
<dbReference type="Pfam" id="PF00468">
    <property type="entry name" value="Ribosomal_L34"/>
    <property type="match status" value="1"/>
</dbReference>
<dbReference type="PROSITE" id="PS00784">
    <property type="entry name" value="RIBOSOMAL_L34"/>
    <property type="match status" value="1"/>
</dbReference>
<name>RL34_BORBZ</name>
<gene>
    <name evidence="1" type="primary">rpmH</name>
    <name type="ordered locus">BbuZS7_0446</name>
</gene>